<reference key="1">
    <citation type="journal article" date="1988" name="Eur. J. Biochem.">
        <title>Mitochondrial aldehyde dehydrogenase from horse liver. Correlations of the same species variants for both the cytosolic and the mitochondrial forms of an enzyme.</title>
        <authorList>
            <person name="Johansson J."/>
            <person name="von Bahr-Lindstroem H."/>
            <person name="Jeck R."/>
            <person name="Woenckhaus C."/>
            <person name="Joernvall H."/>
        </authorList>
    </citation>
    <scope>PROTEIN SEQUENCE</scope>
</reference>
<dbReference type="EC" id="1.2.1.3"/>
<dbReference type="PIR" id="S00364">
    <property type="entry name" value="S00364"/>
</dbReference>
<dbReference type="SMR" id="P12762"/>
<dbReference type="STRING" id="9796.ENSECAP00000015826"/>
<dbReference type="PaxDb" id="9796-ENSECAP00000015826"/>
<dbReference type="PeptideAtlas" id="P12762"/>
<dbReference type="InParanoid" id="P12762"/>
<dbReference type="SABIO-RK" id="P12762"/>
<dbReference type="UniPathway" id="UPA00780">
    <property type="reaction ID" value="UER00768"/>
</dbReference>
<dbReference type="Proteomes" id="UP000002281">
    <property type="component" value="Unplaced"/>
</dbReference>
<dbReference type="GO" id="GO:0005759">
    <property type="term" value="C:mitochondrial matrix"/>
    <property type="evidence" value="ECO:0007669"/>
    <property type="project" value="UniProtKB-SubCell"/>
</dbReference>
<dbReference type="GO" id="GO:0005739">
    <property type="term" value="C:mitochondrion"/>
    <property type="evidence" value="ECO:0000250"/>
    <property type="project" value="UniProtKB"/>
</dbReference>
<dbReference type="GO" id="GO:0004029">
    <property type="term" value="F:aldehyde dehydrogenase (NAD+) activity"/>
    <property type="evidence" value="ECO:0000250"/>
    <property type="project" value="UniProtKB"/>
</dbReference>
<dbReference type="GO" id="GO:0106435">
    <property type="term" value="F:carboxylesterase activity"/>
    <property type="evidence" value="ECO:0000250"/>
    <property type="project" value="UniProtKB"/>
</dbReference>
<dbReference type="GO" id="GO:0051287">
    <property type="term" value="F:NAD binding"/>
    <property type="evidence" value="ECO:0000250"/>
    <property type="project" value="CAFA"/>
</dbReference>
<dbReference type="GO" id="GO:0008957">
    <property type="term" value="F:phenylacetaldehyde dehydrogenase (NAD+) activity"/>
    <property type="evidence" value="ECO:0000250"/>
    <property type="project" value="UniProtKB"/>
</dbReference>
<dbReference type="GO" id="GO:0046185">
    <property type="term" value="P:aldehyde catabolic process"/>
    <property type="evidence" value="ECO:0000250"/>
    <property type="project" value="UniProtKB"/>
</dbReference>
<dbReference type="GO" id="GO:0006068">
    <property type="term" value="P:ethanol catabolic process"/>
    <property type="evidence" value="ECO:0007669"/>
    <property type="project" value="UniProtKB-UniPathway"/>
</dbReference>
<dbReference type="GO" id="GO:0018937">
    <property type="term" value="P:nitroglycerin metabolic process"/>
    <property type="evidence" value="ECO:0000250"/>
    <property type="project" value="UniProtKB"/>
</dbReference>
<dbReference type="GO" id="GO:1903179">
    <property type="term" value="P:regulation of dopamine biosynthetic process"/>
    <property type="evidence" value="ECO:0000250"/>
    <property type="project" value="UniProtKB"/>
</dbReference>
<dbReference type="GO" id="GO:1905627">
    <property type="term" value="P:regulation of serotonin biosynthetic process"/>
    <property type="evidence" value="ECO:0000250"/>
    <property type="project" value="UniProtKB"/>
</dbReference>
<dbReference type="CDD" id="cd07141">
    <property type="entry name" value="ALDH_F1AB_F2_RALDH1"/>
    <property type="match status" value="1"/>
</dbReference>
<dbReference type="FunFam" id="3.40.605.10:FF:000029">
    <property type="entry name" value="Aldehyde dehydrogenase, mitochondrial"/>
    <property type="match status" value="1"/>
</dbReference>
<dbReference type="FunFam" id="3.40.605.10:FF:000026">
    <property type="entry name" value="Aldehyde dehydrogenase, putative"/>
    <property type="match status" value="1"/>
</dbReference>
<dbReference type="FunFam" id="3.40.309.10:FF:000001">
    <property type="entry name" value="Mitochondrial aldehyde dehydrogenase 2"/>
    <property type="match status" value="1"/>
</dbReference>
<dbReference type="Gene3D" id="3.40.605.10">
    <property type="entry name" value="Aldehyde Dehydrogenase, Chain A, domain 1"/>
    <property type="match status" value="1"/>
</dbReference>
<dbReference type="Gene3D" id="3.40.309.10">
    <property type="entry name" value="Aldehyde Dehydrogenase, Chain A, domain 2"/>
    <property type="match status" value="1"/>
</dbReference>
<dbReference type="InterPro" id="IPR016161">
    <property type="entry name" value="Ald_DH/histidinol_DH"/>
</dbReference>
<dbReference type="InterPro" id="IPR016163">
    <property type="entry name" value="Ald_DH_C"/>
</dbReference>
<dbReference type="InterPro" id="IPR016160">
    <property type="entry name" value="Ald_DH_CS_CYS"/>
</dbReference>
<dbReference type="InterPro" id="IPR029510">
    <property type="entry name" value="Ald_DH_CS_GLU"/>
</dbReference>
<dbReference type="InterPro" id="IPR016162">
    <property type="entry name" value="Ald_DH_N"/>
</dbReference>
<dbReference type="InterPro" id="IPR015590">
    <property type="entry name" value="Aldehyde_DH_dom"/>
</dbReference>
<dbReference type="PANTHER" id="PTHR11699">
    <property type="entry name" value="ALDEHYDE DEHYDROGENASE-RELATED"/>
    <property type="match status" value="1"/>
</dbReference>
<dbReference type="Pfam" id="PF00171">
    <property type="entry name" value="Aldedh"/>
    <property type="match status" value="1"/>
</dbReference>
<dbReference type="SUPFAM" id="SSF53720">
    <property type="entry name" value="ALDH-like"/>
    <property type="match status" value="1"/>
</dbReference>
<dbReference type="PROSITE" id="PS00070">
    <property type="entry name" value="ALDEHYDE_DEHYDR_CYS"/>
    <property type="match status" value="1"/>
</dbReference>
<dbReference type="PROSITE" id="PS00687">
    <property type="entry name" value="ALDEHYDE_DEHYDR_GLU"/>
    <property type="match status" value="1"/>
</dbReference>
<keyword id="KW-0007">Acetylation</keyword>
<keyword id="KW-0903">Direct protein sequencing</keyword>
<keyword id="KW-0496">Mitochondrion</keyword>
<keyword id="KW-0520">NAD</keyword>
<keyword id="KW-0560">Oxidoreductase</keyword>
<keyword id="KW-1185">Reference proteome</keyword>
<keyword id="KW-0832">Ubl conjugation</keyword>
<feature type="chain" id="PRO_0000056467" description="Aldehyde dehydrogenase, mitochondrial">
    <location>
        <begin position="1"/>
        <end position="500"/>
    </location>
</feature>
<feature type="active site" description="Proton acceptor" evidence="5 6">
    <location>
        <position position="268"/>
    </location>
</feature>
<feature type="active site" description="Nucleophile" evidence="5 6">
    <location>
        <position position="302"/>
    </location>
</feature>
<feature type="binding site" evidence="1">
    <location>
        <begin position="245"/>
        <end position="250"/>
    </location>
    <ligand>
        <name>NAD(+)</name>
        <dbReference type="ChEBI" id="CHEBI:57540"/>
    </ligand>
</feature>
<feature type="site" description="Transition state stabilizer" evidence="3">
    <location>
        <position position="169"/>
    </location>
</feature>
<feature type="modified residue" description="N6-acetyllysine" evidence="4">
    <location>
        <position position="35"/>
    </location>
</feature>
<feature type="modified residue" description="N6-acetyllysine" evidence="4">
    <location>
        <position position="56"/>
    </location>
</feature>
<feature type="modified residue" description="N6-acetyllysine" evidence="4">
    <location>
        <position position="142"/>
    </location>
</feature>
<feature type="modified residue" description="N6-acetyllysine" evidence="4">
    <location>
        <position position="358"/>
    </location>
</feature>
<feature type="modified residue" description="N6-acetyllysine" evidence="4">
    <location>
        <position position="366"/>
    </location>
</feature>
<feature type="modified residue" description="N6-acetyllysine" evidence="4">
    <location>
        <position position="409"/>
    </location>
</feature>
<feature type="modified residue" description="N6-acetyllysine" evidence="4">
    <location>
        <position position="411"/>
    </location>
</feature>
<feature type="modified residue" description="N6-acetyllysine" evidence="4">
    <location>
        <position position="424"/>
    </location>
</feature>
<feature type="modified residue" description="N6-acetyllysine" evidence="4">
    <location>
        <position position="434"/>
    </location>
</feature>
<feature type="sequence variant">
    <original>A</original>
    <variation>L</variation>
    <location>
        <position position="1"/>
    </location>
</feature>
<feature type="sequence variant">
    <original>A</original>
    <variation>S</variation>
    <location>
        <position position="1"/>
    </location>
</feature>
<name>ALDH2_HORSE</name>
<sequence>AAAATQAVPAPNQQPEVFYNQIFINNEWHDAVSKKTFPTVNPSTGEVICQVAAGDKEDVDRAVKAARAAFQLGSPWRRMDASDRGRLLNRLADLIERDRTYLAALETLDNGKPYVISYLVDLDMVLKCLRYYAGWADKYHGKTIPIDGDFFSYTRHEPVGVCGQIIPWNFPLLMQAAKLGPALATGNVVVMKVAEQTPLTALYVANLTKEAGFPPGVVNVVPGFGPTAGAAIASHEDVDKVAFTGSTEVGHLIQVAAGRSNLKKVTLELGGKSPNIIVSDADMDWAVEQAHFALFFNQGQCCGAGSRTFVQEDVYAEFVERSVARAKSRVVGNPFDSQTEQGPQVDETQFNKVLGYIKSGKEEGAKLLCGGGAAADRGYFIQPTVFGDVQDGMTIAKEEIFGPVMQILKFKTIEEVVGRANNSKYGLAAAVFTKDLDKANYLSQALQAGTVWINCYDVFGAQSPFGGYKMSGNGRELGEYGLQAYTEVKTVTIKVPQKNS</sequence>
<gene>
    <name type="primary">ALDH2</name>
</gene>
<accession>P12762</accession>
<protein>
    <recommendedName>
        <fullName>Aldehyde dehydrogenase, mitochondrial</fullName>
        <ecNumber>1.2.1.3</ecNumber>
    </recommendedName>
    <alternativeName>
        <fullName>ALDH class 2</fullName>
    </alternativeName>
    <alternativeName>
        <fullName>ALDH-E2</fullName>
    </alternativeName>
    <alternativeName>
        <fullName>ALDHI</fullName>
    </alternativeName>
</protein>
<organism>
    <name type="scientific">Equus caballus</name>
    <name type="common">Horse</name>
    <dbReference type="NCBI Taxonomy" id="9796"/>
    <lineage>
        <taxon>Eukaryota</taxon>
        <taxon>Metazoa</taxon>
        <taxon>Chordata</taxon>
        <taxon>Craniata</taxon>
        <taxon>Vertebrata</taxon>
        <taxon>Euteleostomi</taxon>
        <taxon>Mammalia</taxon>
        <taxon>Eutheria</taxon>
        <taxon>Laurasiatheria</taxon>
        <taxon>Perissodactyla</taxon>
        <taxon>Equidae</taxon>
        <taxon>Equus</taxon>
    </lineage>
</organism>
<proteinExistence type="evidence at protein level"/>
<comment type="function">
    <text evidence="2">Required for clearance of cellular formaldehyde, a cytotoxic and carcinogenic metabolite that induces DNA damage.</text>
</comment>
<comment type="catalytic activity">
    <reaction>
        <text>an aldehyde + NAD(+) + H2O = a carboxylate + NADH + 2 H(+)</text>
        <dbReference type="Rhea" id="RHEA:16185"/>
        <dbReference type="ChEBI" id="CHEBI:15377"/>
        <dbReference type="ChEBI" id="CHEBI:15378"/>
        <dbReference type="ChEBI" id="CHEBI:17478"/>
        <dbReference type="ChEBI" id="CHEBI:29067"/>
        <dbReference type="ChEBI" id="CHEBI:57540"/>
        <dbReference type="ChEBI" id="CHEBI:57945"/>
        <dbReference type="EC" id="1.2.1.3"/>
    </reaction>
</comment>
<comment type="pathway">
    <text>Alcohol metabolism; ethanol degradation; acetate from ethanol: step 2/2.</text>
</comment>
<comment type="subunit">
    <text>Homotetramer.</text>
</comment>
<comment type="subcellular location">
    <subcellularLocation>
        <location>Mitochondrion matrix</location>
    </subcellularLocation>
</comment>
<comment type="PTM">
    <text evidence="2">In response to mitochondrial stress, the precursor protein is ubiquitinated by the SIFI complex in the cytoplasm before mitochondrial import, leading to its degradation. Within the SIFI complex, UBR4 initiates ubiquitin chain that are further elongated or branched by KCMF1.</text>
</comment>
<comment type="similarity">
    <text evidence="7">Belongs to the aldehyde dehydrogenase family.</text>
</comment>
<evidence type="ECO:0000250" key="1"/>
<evidence type="ECO:0000250" key="2">
    <source>
        <dbReference type="UniProtKB" id="P05091"/>
    </source>
</evidence>
<evidence type="ECO:0000250" key="3">
    <source>
        <dbReference type="UniProtKB" id="P20000"/>
    </source>
</evidence>
<evidence type="ECO:0000250" key="4">
    <source>
        <dbReference type="UniProtKB" id="P47738"/>
    </source>
</evidence>
<evidence type="ECO:0000255" key="5">
    <source>
        <dbReference type="PROSITE-ProRule" id="PRU10007"/>
    </source>
</evidence>
<evidence type="ECO:0000255" key="6">
    <source>
        <dbReference type="PROSITE-ProRule" id="PRU10008"/>
    </source>
</evidence>
<evidence type="ECO:0000305" key="7"/>